<feature type="signal peptide" evidence="2">
    <location>
        <begin position="1"/>
        <end position="35"/>
    </location>
</feature>
<feature type="propeptide" id="PRO_0000017756" description="Removed in mature form" evidence="5">
    <location>
        <begin position="36"/>
        <end position="302"/>
    </location>
</feature>
<feature type="chain" id="PRO_0000017757" description="Lipase">
    <location>
        <begin position="303"/>
        <end position="688"/>
    </location>
</feature>
<feature type="region of interest" description="Disordered" evidence="4">
    <location>
        <begin position="31"/>
        <end position="309"/>
    </location>
</feature>
<feature type="compositionally biased region" description="Polar residues" evidence="4">
    <location>
        <begin position="45"/>
        <end position="54"/>
    </location>
</feature>
<feature type="compositionally biased region" description="Low complexity" evidence="4">
    <location>
        <begin position="68"/>
        <end position="79"/>
    </location>
</feature>
<feature type="compositionally biased region" description="Basic and acidic residues" evidence="4">
    <location>
        <begin position="84"/>
        <end position="95"/>
    </location>
</feature>
<feature type="compositionally biased region" description="Basic and acidic residues" evidence="4">
    <location>
        <begin position="103"/>
        <end position="117"/>
    </location>
</feature>
<feature type="compositionally biased region" description="Basic and acidic residues" evidence="4">
    <location>
        <begin position="126"/>
        <end position="143"/>
    </location>
</feature>
<feature type="compositionally biased region" description="Polar residues" evidence="4">
    <location>
        <begin position="144"/>
        <end position="172"/>
    </location>
</feature>
<feature type="compositionally biased region" description="Basic and acidic residues" evidence="4">
    <location>
        <begin position="173"/>
        <end position="183"/>
    </location>
</feature>
<feature type="compositionally biased region" description="Polar residues" evidence="4">
    <location>
        <begin position="184"/>
        <end position="211"/>
    </location>
</feature>
<feature type="compositionally biased region" description="Basic and acidic residues" evidence="4">
    <location>
        <begin position="240"/>
        <end position="267"/>
    </location>
</feature>
<feature type="compositionally biased region" description="Polar residues" evidence="4">
    <location>
        <begin position="274"/>
        <end position="289"/>
    </location>
</feature>
<feature type="active site" description="Nucleophile" evidence="1">
    <location>
        <position position="418"/>
    </location>
</feature>
<feature type="active site" description="Charge relay system" evidence="3">
    <location>
        <position position="609"/>
    </location>
</feature>
<feature type="active site" description="Charge relay system" evidence="3">
    <location>
        <position position="648"/>
    </location>
</feature>
<feature type="binding site" evidence="1">
    <location>
        <position position="647"/>
    </location>
    <ligand>
        <name>Ca(2+)</name>
        <dbReference type="ChEBI" id="CHEBI:29108"/>
    </ligand>
</feature>
<feature type="binding site" evidence="1">
    <location>
        <position position="650"/>
    </location>
    <ligand>
        <name>Ca(2+)</name>
        <dbReference type="ChEBI" id="CHEBI:29108"/>
    </ligand>
</feature>
<feature type="binding site" evidence="1">
    <location>
        <position position="655"/>
    </location>
    <ligand>
        <name>Ca(2+)</name>
        <dbReference type="ChEBI" id="CHEBI:29108"/>
    </ligand>
</feature>
<feature type="binding site" evidence="1">
    <location>
        <position position="658"/>
    </location>
    <ligand>
        <name>Ca(2+)</name>
        <dbReference type="ChEBI" id="CHEBI:29108"/>
    </ligand>
</feature>
<keyword id="KW-0106">Calcium</keyword>
<keyword id="KW-0903">Direct protein sequencing</keyword>
<keyword id="KW-0378">Hydrolase</keyword>
<keyword id="KW-0442">Lipid degradation</keyword>
<keyword id="KW-0443">Lipid metabolism</keyword>
<keyword id="KW-0479">Metal-binding</keyword>
<keyword id="KW-0964">Secreted</keyword>
<keyword id="KW-0732">Signal</keyword>
<keyword id="KW-0865">Zymogen</keyword>
<accession>P0C0R3</accession>
<accession>Q02510</accession>
<protein>
    <recommendedName>
        <fullName>Lipase</fullName>
        <ecNumber>3.1.1.3</ecNumber>
    </recommendedName>
    <alternativeName>
        <fullName>Glycerol ester hydrolase</fullName>
    </alternativeName>
</protein>
<proteinExistence type="evidence at protein level"/>
<organism>
    <name type="scientific">Staphylococcus epidermidis</name>
    <dbReference type="NCBI Taxonomy" id="1282"/>
    <lineage>
        <taxon>Bacteria</taxon>
        <taxon>Bacillati</taxon>
        <taxon>Bacillota</taxon>
        <taxon>Bacilli</taxon>
        <taxon>Bacillales</taxon>
        <taxon>Staphylococcaceae</taxon>
        <taxon>Staphylococcus</taxon>
    </lineage>
</organism>
<dbReference type="EC" id="3.1.1.3"/>
<dbReference type="EMBL" id="M95577">
    <property type="protein sequence ID" value="AAA19729.1"/>
    <property type="molecule type" value="Unassigned_DNA"/>
</dbReference>
<dbReference type="PIR" id="A47705">
    <property type="entry name" value="A47705"/>
</dbReference>
<dbReference type="RefSeq" id="WP_002505851.1">
    <property type="nucleotide sequence ID" value="NZ_CP088002.1"/>
</dbReference>
<dbReference type="SMR" id="P0C0R3"/>
<dbReference type="ESTHER" id="staep-lipas">
    <property type="family name" value="Bacterial_lip_FamI.6"/>
</dbReference>
<dbReference type="GO" id="GO:0005576">
    <property type="term" value="C:extracellular region"/>
    <property type="evidence" value="ECO:0007669"/>
    <property type="project" value="UniProtKB-SubCell"/>
</dbReference>
<dbReference type="GO" id="GO:0046872">
    <property type="term" value="F:metal ion binding"/>
    <property type="evidence" value="ECO:0007669"/>
    <property type="project" value="UniProtKB-KW"/>
</dbReference>
<dbReference type="GO" id="GO:0004806">
    <property type="term" value="F:triacylglycerol lipase activity"/>
    <property type="evidence" value="ECO:0007669"/>
    <property type="project" value="UniProtKB-EC"/>
</dbReference>
<dbReference type="GO" id="GO:0016042">
    <property type="term" value="P:lipid catabolic process"/>
    <property type="evidence" value="ECO:0007669"/>
    <property type="project" value="UniProtKB-KW"/>
</dbReference>
<dbReference type="Gene3D" id="3.40.50.1820">
    <property type="entry name" value="alpha/beta hydrolase"/>
    <property type="match status" value="1"/>
</dbReference>
<dbReference type="InterPro" id="IPR029058">
    <property type="entry name" value="AB_hydrolase_fold"/>
</dbReference>
<dbReference type="InterPro" id="IPR056304">
    <property type="entry name" value="Lip-like_C"/>
</dbReference>
<dbReference type="InterPro" id="IPR005877">
    <property type="entry name" value="YSIRK_signal_dom"/>
</dbReference>
<dbReference type="NCBIfam" id="NF047351">
    <property type="entry name" value="lipase_YSIRK_Sa"/>
    <property type="match status" value="1"/>
</dbReference>
<dbReference type="NCBIfam" id="TIGR01168">
    <property type="entry name" value="YSIRK_signal"/>
    <property type="match status" value="1"/>
</dbReference>
<dbReference type="PANTHER" id="PTHR34043">
    <property type="entry name" value="ALPHA/BETA-HYDROLASES SUPERFAMILY PROTEIN"/>
    <property type="match status" value="1"/>
</dbReference>
<dbReference type="PANTHER" id="PTHR34043:SF3">
    <property type="entry name" value="ALPHA_BETA-HYDROLASES SUPERFAMILY PROTEIN"/>
    <property type="match status" value="1"/>
</dbReference>
<dbReference type="Pfam" id="PF24708">
    <property type="entry name" value="Lip_C"/>
    <property type="match status" value="1"/>
</dbReference>
<dbReference type="Pfam" id="PF04650">
    <property type="entry name" value="YSIRK_signal"/>
    <property type="match status" value="1"/>
</dbReference>
<dbReference type="SUPFAM" id="SSF53474">
    <property type="entry name" value="alpha/beta-Hydrolases"/>
    <property type="match status" value="1"/>
</dbReference>
<dbReference type="PROSITE" id="PS00120">
    <property type="entry name" value="LIPASE_SER"/>
    <property type="match status" value="1"/>
</dbReference>
<comment type="catalytic activity">
    <reaction>
        <text>a triacylglycerol + H2O = a diacylglycerol + a fatty acid + H(+)</text>
        <dbReference type="Rhea" id="RHEA:12044"/>
        <dbReference type="ChEBI" id="CHEBI:15377"/>
        <dbReference type="ChEBI" id="CHEBI:15378"/>
        <dbReference type="ChEBI" id="CHEBI:17855"/>
        <dbReference type="ChEBI" id="CHEBI:18035"/>
        <dbReference type="ChEBI" id="CHEBI:28868"/>
        <dbReference type="EC" id="3.1.1.3"/>
    </reaction>
</comment>
<comment type="subcellular location">
    <subcellularLocation>
        <location>Secreted</location>
    </subcellularLocation>
</comment>
<comment type="similarity">
    <text evidence="6">Belongs to the AB hydrolase superfamily. Lipase family.</text>
</comment>
<name>LIP_STAEP</name>
<evidence type="ECO:0000250" key="1"/>
<evidence type="ECO:0000255" key="2"/>
<evidence type="ECO:0000255" key="3">
    <source>
        <dbReference type="PROSITE-ProRule" id="PRU10037"/>
    </source>
</evidence>
<evidence type="ECO:0000256" key="4">
    <source>
        <dbReference type="SAM" id="MobiDB-lite"/>
    </source>
</evidence>
<evidence type="ECO:0000269" key="5">
    <source>
    </source>
</evidence>
<evidence type="ECO:0000305" key="6"/>
<reference key="1">
    <citation type="journal article" date="1993" name="J. Gen. Microbiol.">
        <title>Molecular analysis and expression of the lipase of Staphylococcus epidermidis.</title>
        <authorList>
            <person name="Farrell A.M."/>
            <person name="Foster T.J."/>
            <person name="Holland K.T."/>
        </authorList>
    </citation>
    <scope>NUCLEOTIDE SEQUENCE [GENOMIC DNA]</scope>
    <scope>PROTEIN SEQUENCE OF 303-315</scope>
    <source>
        <strain>9</strain>
    </source>
</reference>
<sequence length="688" mass="77198">MKTRQNKYSIRKFSVGASSILIAALLFMGGGSAQAAEQQQDKGTVENSTTQSIGDGNEKLSEQQSTQNKNVNEKSNVNSITENESLHNETPKNEDLIQQQKDSQNDNKSESVVEQNKENGAFVQNHSEEKPQQEQVELEKHASENNQTLHSKAAQSNEDVKTKPSQLDNTAAKQEDSQKENLSKQDTQSSKTTDLLRATAQNQSKDSQSTEEINKEVNNDTQQVTAKNDDAKVESFNLNSKEEPLKVDKQANPTTDKDKSSKNDKGSQDGLANLESNAVATTNKQSKQQVSEKNEDQTNKSAKQKQYKNNDPIILVHGFNGFTDDINPSVLTHYWGGDKMNIRQDLEENGYEAYEASISAFGSNYDRAVELYYYIKGGRVDYGAAHAAKYGHERYGKTYEGVYKDWKPGQKIHLVGHSMGGQTIRQLEELLRHGNPEEVEYQKQHGGEISPLYQGGHDNMVSSITTLGTPHNGTHASDLLGNEAIVRQLAYDVGKMYGNKDSRVDFGLEHWGLKQKPNESYIQYVKRVQNSKLWKSKDSGLHDLTRDGATDLNRKTSLNPNIVYKTYTGESTHKTLAGKQKADLNMFLPFTITGNLIGKAKEKEWRENDGLVSVISSQHPFNQKYVEATDKNQKGVWQVTPTKHDWDHVDFVGQDSTDTKRTRDELQQFWHGLAEDLVQSEQLTSTNK</sequence>
<gene>
    <name type="primary">lip</name>
    <name type="synonym">gehC</name>
</gene>